<accession>P06203</accession>
<organism>
    <name type="scientific">Salmonella typhimurium (strain LT2 / SGSC1412 / ATCC 700720)</name>
    <dbReference type="NCBI Taxonomy" id="99287"/>
    <lineage>
        <taxon>Bacteria</taxon>
        <taxon>Pseudomonadati</taxon>
        <taxon>Pseudomonadota</taxon>
        <taxon>Gammaproteobacteria</taxon>
        <taxon>Enterobacterales</taxon>
        <taxon>Enterobacteriaceae</taxon>
        <taxon>Salmonella</taxon>
    </lineage>
</organism>
<reference key="1">
    <citation type="journal article" date="1985" name="Nucleic Acids Res.">
        <title>Nucleotide sequence and biochemical characterization of the metJ gene from Salmonella typhimurium LT2.</title>
        <authorList>
            <person name="Urbanowski M.L."/>
            <person name="Stauffer G.V."/>
        </authorList>
    </citation>
    <scope>NUCLEOTIDE SEQUENCE [GENOMIC DNA]</scope>
    <source>
        <strain>LT2</strain>
    </source>
</reference>
<reference key="2">
    <citation type="journal article" date="2001" name="Nature">
        <title>Complete genome sequence of Salmonella enterica serovar Typhimurium LT2.</title>
        <authorList>
            <person name="McClelland M."/>
            <person name="Sanderson K.E."/>
            <person name="Spieth J."/>
            <person name="Clifton S.W."/>
            <person name="Latreille P."/>
            <person name="Courtney L."/>
            <person name="Porwollik S."/>
            <person name="Ali J."/>
            <person name="Dante M."/>
            <person name="Du F."/>
            <person name="Hou S."/>
            <person name="Layman D."/>
            <person name="Leonard S."/>
            <person name="Nguyen C."/>
            <person name="Scott K."/>
            <person name="Holmes A."/>
            <person name="Grewal N."/>
            <person name="Mulvaney E."/>
            <person name="Ryan E."/>
            <person name="Sun H."/>
            <person name="Florea L."/>
            <person name="Miller W."/>
            <person name="Stoneking T."/>
            <person name="Nhan M."/>
            <person name="Waterston R."/>
            <person name="Wilson R.K."/>
        </authorList>
    </citation>
    <scope>NUCLEOTIDE SEQUENCE [LARGE SCALE GENOMIC DNA]</scope>
    <source>
        <strain>LT2 / SGSC1412 / ATCC 700720</strain>
    </source>
</reference>
<feature type="initiator methionine" description="Removed" evidence="1">
    <location>
        <position position="1"/>
    </location>
</feature>
<feature type="chain" id="PRO_0000198405" description="Met repressor">
    <location>
        <begin position="2"/>
        <end position="105"/>
    </location>
</feature>
<sequence>MAEWSGEYISPYAEHGKKSEQVKKITVSIPLKVLKILTDERTRRQVNNLRHATNSELLCEAFLHAFTGQPLPDDADLRKERSDEIPEAAKEIMRELGIDPETWEY</sequence>
<comment type="function">
    <text evidence="1">This regulatory protein, when combined with SAM (S-adenosylmethionine) represses the expression of the methionine regulon and of enzymes involved in SAM synthesis. It is also autoregulated (By similarity).</text>
</comment>
<comment type="subunit">
    <text evidence="1">Homodimer.</text>
</comment>
<comment type="subcellular location">
    <subcellularLocation>
        <location evidence="1">Cytoplasm</location>
    </subcellularLocation>
</comment>
<comment type="domain">
    <text>Does not bind DNA by a helix-turn-helix motif.</text>
</comment>
<comment type="similarity">
    <text evidence="2">Belongs to the MetJ family.</text>
</comment>
<evidence type="ECO:0000250" key="1"/>
<evidence type="ECO:0000305" key="2"/>
<dbReference type="EMBL" id="X01961">
    <property type="protein sequence ID" value="CAA25997.1"/>
    <property type="molecule type" value="Genomic_DNA"/>
</dbReference>
<dbReference type="EMBL" id="AE006468">
    <property type="protein sequence ID" value="AAL22939.1"/>
    <property type="molecule type" value="Genomic_DNA"/>
</dbReference>
<dbReference type="PIR" id="A23081">
    <property type="entry name" value="A23081"/>
</dbReference>
<dbReference type="RefSeq" id="NP_462980.1">
    <property type="nucleotide sequence ID" value="NC_003197.2"/>
</dbReference>
<dbReference type="RefSeq" id="WP_000852810.1">
    <property type="nucleotide sequence ID" value="NC_003197.2"/>
</dbReference>
<dbReference type="SMR" id="P06203"/>
<dbReference type="STRING" id="99287.STM4099"/>
<dbReference type="PaxDb" id="99287-STM4099"/>
<dbReference type="GeneID" id="1255626"/>
<dbReference type="KEGG" id="stm:STM4099"/>
<dbReference type="PATRIC" id="fig|99287.12.peg.4321"/>
<dbReference type="HOGENOM" id="CLU_142318_0_0_6"/>
<dbReference type="OMA" id="KWNGEYI"/>
<dbReference type="PhylomeDB" id="P06203"/>
<dbReference type="BioCyc" id="SENT99287:STM4099-MONOMER"/>
<dbReference type="PHI-base" id="PHI:9083"/>
<dbReference type="Proteomes" id="UP000001014">
    <property type="component" value="Chromosome"/>
</dbReference>
<dbReference type="GO" id="GO:0005737">
    <property type="term" value="C:cytoplasm"/>
    <property type="evidence" value="ECO:0007669"/>
    <property type="project" value="UniProtKB-SubCell"/>
</dbReference>
<dbReference type="GO" id="GO:0003677">
    <property type="term" value="F:DNA binding"/>
    <property type="evidence" value="ECO:0007669"/>
    <property type="project" value="UniProtKB-KW"/>
</dbReference>
<dbReference type="GO" id="GO:0003700">
    <property type="term" value="F:DNA-binding transcription factor activity"/>
    <property type="evidence" value="ECO:0007669"/>
    <property type="project" value="InterPro"/>
</dbReference>
<dbReference type="GO" id="GO:0009086">
    <property type="term" value="P:methionine biosynthetic process"/>
    <property type="evidence" value="ECO:0007669"/>
    <property type="project" value="UniProtKB-UniRule"/>
</dbReference>
<dbReference type="GO" id="GO:0045892">
    <property type="term" value="P:negative regulation of DNA-templated transcription"/>
    <property type="evidence" value="ECO:0007669"/>
    <property type="project" value="UniProtKB-UniRule"/>
</dbReference>
<dbReference type="CDD" id="cd00490">
    <property type="entry name" value="Met_repressor_MetJ"/>
    <property type="match status" value="1"/>
</dbReference>
<dbReference type="FunFam" id="1.10.140.10:FF:000001">
    <property type="entry name" value="Met repressor"/>
    <property type="match status" value="1"/>
</dbReference>
<dbReference type="Gene3D" id="1.10.140.10">
    <property type="entry name" value="MET Apo-Repressor, subunit A"/>
    <property type="match status" value="1"/>
</dbReference>
<dbReference type="HAMAP" id="MF_00744">
    <property type="entry name" value="MetJ"/>
    <property type="match status" value="1"/>
</dbReference>
<dbReference type="InterPro" id="IPR002084">
    <property type="entry name" value="Met_repressor_MetJ"/>
</dbReference>
<dbReference type="InterPro" id="IPR023453">
    <property type="entry name" value="Met_repressor_MetJ_dom_sf"/>
</dbReference>
<dbReference type="InterPro" id="IPR010985">
    <property type="entry name" value="Ribbon_hlx_hlx"/>
</dbReference>
<dbReference type="NCBIfam" id="NF003622">
    <property type="entry name" value="PRK05264.1"/>
    <property type="match status" value="1"/>
</dbReference>
<dbReference type="Pfam" id="PF01340">
    <property type="entry name" value="MetJ"/>
    <property type="match status" value="1"/>
</dbReference>
<dbReference type="SUPFAM" id="SSF47598">
    <property type="entry name" value="Ribbon-helix-helix"/>
    <property type="match status" value="1"/>
</dbReference>
<protein>
    <recommendedName>
        <fullName>Met repressor</fullName>
    </recommendedName>
    <alternativeName>
        <fullName>Met regulon regulatory protein MetJ</fullName>
    </alternativeName>
</protein>
<keyword id="KW-0028">Amino-acid biosynthesis</keyword>
<keyword id="KW-0963">Cytoplasm</keyword>
<keyword id="KW-0238">DNA-binding</keyword>
<keyword id="KW-0486">Methionine biosynthesis</keyword>
<keyword id="KW-1185">Reference proteome</keyword>
<keyword id="KW-0678">Repressor</keyword>
<keyword id="KW-0804">Transcription</keyword>
<keyword id="KW-0805">Transcription regulation</keyword>
<proteinExistence type="inferred from homology"/>
<gene>
    <name type="primary">metJ</name>
    <name type="ordered locus">STM4099</name>
</gene>
<name>METJ_SALTY</name>